<dbReference type="GO" id="GO:0005576">
    <property type="term" value="C:extracellular region"/>
    <property type="evidence" value="ECO:0007005"/>
    <property type="project" value="UniProtKB"/>
</dbReference>
<dbReference type="GO" id="GO:0007218">
    <property type="term" value="P:neuropeptide signaling pathway"/>
    <property type="evidence" value="ECO:0007669"/>
    <property type="project" value="UniProtKB-KW"/>
</dbReference>
<evidence type="ECO:0000269" key="1">
    <source>
    </source>
</evidence>
<evidence type="ECO:0000303" key="2">
    <source>
    </source>
</evidence>
<evidence type="ECO:0000305" key="3"/>
<protein>
    <recommendedName>
        <fullName evidence="2">Tachykinin-related peptide 4</fullName>
        <shortName evidence="2">TKRP-4</shortName>
    </recommendedName>
</protein>
<keyword id="KW-0027">Amidation</keyword>
<keyword id="KW-0903">Direct protein sequencing</keyword>
<keyword id="KW-0527">Neuropeptide</keyword>
<keyword id="KW-0964">Secreted</keyword>
<accession>P86585</accession>
<feature type="peptide" id="PRO_0000395653" description="Tachykinin-related peptide 4" evidence="1">
    <location>
        <begin position="1"/>
        <end position="10"/>
    </location>
</feature>
<feature type="modified residue" description="Arginine amide" evidence="1">
    <location>
        <position position="10"/>
    </location>
</feature>
<comment type="subcellular location">
    <subcellularLocation>
        <location evidence="1 3">Secreted</location>
    </subcellularLocation>
</comment>
<comment type="tissue specificity">
    <text evidence="1">Expressed in the abdominal ventral nerve cord (at protein level).</text>
</comment>
<reference evidence="3" key="1">
    <citation type="journal article" date="2009" name="Peptides">
        <title>Neuropeptides in Heteroptera: identification of allatotropin-related peptide and tachykinin-related peptides using MALDI-TOF mass spectrometry.</title>
        <authorList>
            <person name="Neupert S."/>
            <person name="Russell W.K."/>
            <person name="Russell D.H."/>
            <person name="Lopez J.D. Jr."/>
            <person name="Predel R."/>
            <person name="Nachman R.J."/>
        </authorList>
    </citation>
    <scope>PROTEIN SEQUENCE</scope>
    <scope>SUBCELLULAR LOCATION</scope>
    <scope>TISSUE SPECIFICITY</scope>
    <scope>AMIDATION AT ARG-10</scope>
    <source>
        <tissue evidence="1">Abdominal nerve cord</tissue>
    </source>
</reference>
<organism>
    <name type="scientific">Oncopeltus fasciatus</name>
    <name type="common">Large milkweed bug</name>
    <dbReference type="NCBI Taxonomy" id="7536"/>
    <lineage>
        <taxon>Eukaryota</taxon>
        <taxon>Metazoa</taxon>
        <taxon>Ecdysozoa</taxon>
        <taxon>Arthropoda</taxon>
        <taxon>Hexapoda</taxon>
        <taxon>Insecta</taxon>
        <taxon>Pterygota</taxon>
        <taxon>Neoptera</taxon>
        <taxon>Paraneoptera</taxon>
        <taxon>Hemiptera</taxon>
        <taxon>Heteroptera</taxon>
        <taxon>Panheteroptera</taxon>
        <taxon>Pentatomomorpha</taxon>
        <taxon>Lygaeoidea</taxon>
        <taxon>Lygaeidae</taxon>
        <taxon>Lygaeinae</taxon>
        <taxon>Oncopeltus</taxon>
    </lineage>
</organism>
<proteinExistence type="evidence at protein level"/>
<name>TRP4_ONCFA</name>
<sequence length="10" mass="1083">NPASGFFGMR</sequence>